<sequence>MLDSIKIKLQYLLPKQGLTQLAGWGANKQGGWLTQLVIKAFARYYKVDMKEAQDPEFSAYRTFNEFFVRPLRAGVRPVVAEENLLAQPADGAISQLGAIREGQILQAKGHNYSLEALLAGNYLLAAEFQNGQFVTTYLAPRDYHRVHMPCDGVLREMIYVPGDLFSVNPLTAANVPNLFARNERVICIFDTAFGPMAQILVGATIVGSIETVWAGTITPPREGVIRRWTYPQAGCEGAITLEKGQEMGRFKLGSTVINLFAEGKVYFAPQLNSGAVTRMGEVLAEAVPTTPSY</sequence>
<keyword id="KW-1003">Cell membrane</keyword>
<keyword id="KW-0210">Decarboxylase</keyword>
<keyword id="KW-0444">Lipid biosynthesis</keyword>
<keyword id="KW-0443">Lipid metabolism</keyword>
<keyword id="KW-0456">Lyase</keyword>
<keyword id="KW-0472">Membrane</keyword>
<keyword id="KW-0594">Phospholipid biosynthesis</keyword>
<keyword id="KW-1208">Phospholipid metabolism</keyword>
<keyword id="KW-0670">Pyruvate</keyword>
<keyword id="KW-0865">Zymogen</keyword>
<gene>
    <name evidence="1" type="primary">psd</name>
    <name type="ordered locus">YPTB0416</name>
</gene>
<protein>
    <recommendedName>
        <fullName evidence="1">Phosphatidylserine decarboxylase proenzyme</fullName>
        <ecNumber evidence="1">4.1.1.65</ecNumber>
    </recommendedName>
    <component>
        <recommendedName>
            <fullName evidence="1">Phosphatidylserine decarboxylase alpha chain</fullName>
        </recommendedName>
    </component>
    <component>
        <recommendedName>
            <fullName evidence="1">Phosphatidylserine decarboxylase beta chain</fullName>
        </recommendedName>
    </component>
</protein>
<comment type="function">
    <text evidence="1">Catalyzes the formation of phosphatidylethanolamine (PtdEtn) from phosphatidylserine (PtdSer).</text>
</comment>
<comment type="catalytic activity">
    <reaction evidence="1">
        <text>a 1,2-diacyl-sn-glycero-3-phospho-L-serine + H(+) = a 1,2-diacyl-sn-glycero-3-phosphoethanolamine + CO2</text>
        <dbReference type="Rhea" id="RHEA:20828"/>
        <dbReference type="ChEBI" id="CHEBI:15378"/>
        <dbReference type="ChEBI" id="CHEBI:16526"/>
        <dbReference type="ChEBI" id="CHEBI:57262"/>
        <dbReference type="ChEBI" id="CHEBI:64612"/>
        <dbReference type="EC" id="4.1.1.65"/>
    </reaction>
</comment>
<comment type="cofactor">
    <cofactor evidence="1">
        <name>pyruvate</name>
        <dbReference type="ChEBI" id="CHEBI:15361"/>
    </cofactor>
    <text evidence="1">Binds 1 pyruvoyl group covalently per subunit.</text>
</comment>
<comment type="pathway">
    <text evidence="1">Phospholipid metabolism; phosphatidylethanolamine biosynthesis; phosphatidylethanolamine from CDP-diacylglycerol: step 2/2.</text>
</comment>
<comment type="subunit">
    <text evidence="1">Heterodimer of a large membrane-associated beta subunit and a small pyruvoyl-containing alpha subunit.</text>
</comment>
<comment type="subcellular location">
    <subcellularLocation>
        <location evidence="1">Cell membrane</location>
        <topology evidence="1">Peripheral membrane protein</topology>
    </subcellularLocation>
</comment>
<comment type="PTM">
    <text evidence="1">Is synthesized initially as an inactive proenzyme. Formation of the active enzyme involves a self-maturation process in which the active site pyruvoyl group is generated from an internal serine residue via an autocatalytic post-translational modification. Two non-identical subunits are generated from the proenzyme in this reaction, and the pyruvate is formed at the N-terminus of the alpha chain, which is derived from the carboxyl end of the proenzyme. The autoendoproteolytic cleavage occurs by a canonical serine protease mechanism, in which the side chain hydroxyl group of the serine supplies its oxygen atom to form the C-terminus of the beta chain, while the remainder of the serine residue undergoes an oxidative deamination to produce ammonia and the pyruvoyl prosthetic group on the alpha chain. During this reaction, the Ser that is part of the protease active site of the proenzyme becomes the pyruvoyl prosthetic group, which constitutes an essential element of the active site of the mature decarboxylase.</text>
</comment>
<comment type="similarity">
    <text evidence="1">Belongs to the phosphatidylserine decarboxylase family. PSD-B subfamily. Prokaryotic type I sub-subfamily.</text>
</comment>
<evidence type="ECO:0000255" key="1">
    <source>
        <dbReference type="HAMAP-Rule" id="MF_00662"/>
    </source>
</evidence>
<accession>Q66FC4</accession>
<name>PSD_YERPS</name>
<feature type="chain" id="PRO_0000029725" description="Phosphatidylserine decarboxylase beta chain" evidence="1">
    <location>
        <begin position="1"/>
        <end position="253"/>
    </location>
</feature>
<feature type="chain" id="PRO_0000029726" description="Phosphatidylserine decarboxylase alpha chain" evidence="1">
    <location>
        <begin position="254"/>
        <end position="293"/>
    </location>
</feature>
<feature type="active site" description="Charge relay system; for autoendoproteolytic cleavage activity" evidence="1">
    <location>
        <position position="90"/>
    </location>
</feature>
<feature type="active site" description="Charge relay system; for autoendoproteolytic cleavage activity" evidence="1">
    <location>
        <position position="147"/>
    </location>
</feature>
<feature type="active site" description="Charge relay system; for autoendoproteolytic cleavage activity" evidence="1">
    <location>
        <position position="254"/>
    </location>
</feature>
<feature type="active site" description="Schiff-base intermediate with substrate; via pyruvic acid; for decarboxylase activity" evidence="1">
    <location>
        <position position="254"/>
    </location>
</feature>
<feature type="site" description="Cleavage (non-hydrolytic); by autocatalysis" evidence="1">
    <location>
        <begin position="253"/>
        <end position="254"/>
    </location>
</feature>
<feature type="modified residue" description="Pyruvic acid (Ser); by autocatalysis" evidence="1">
    <location>
        <position position="254"/>
    </location>
</feature>
<organism>
    <name type="scientific">Yersinia pseudotuberculosis serotype I (strain IP32953)</name>
    <dbReference type="NCBI Taxonomy" id="273123"/>
    <lineage>
        <taxon>Bacteria</taxon>
        <taxon>Pseudomonadati</taxon>
        <taxon>Pseudomonadota</taxon>
        <taxon>Gammaproteobacteria</taxon>
        <taxon>Enterobacterales</taxon>
        <taxon>Yersiniaceae</taxon>
        <taxon>Yersinia</taxon>
    </lineage>
</organism>
<proteinExistence type="inferred from homology"/>
<dbReference type="EC" id="4.1.1.65" evidence="1"/>
<dbReference type="EMBL" id="BX936398">
    <property type="protein sequence ID" value="CAH19656.1"/>
    <property type="molecule type" value="Genomic_DNA"/>
</dbReference>
<dbReference type="SMR" id="Q66FC4"/>
<dbReference type="KEGG" id="ypo:BZ17_2153"/>
<dbReference type="KEGG" id="yps:YPTB0416"/>
<dbReference type="PATRIC" id="fig|273123.14.peg.2277"/>
<dbReference type="UniPathway" id="UPA00558">
    <property type="reaction ID" value="UER00616"/>
</dbReference>
<dbReference type="Proteomes" id="UP000001011">
    <property type="component" value="Chromosome"/>
</dbReference>
<dbReference type="GO" id="GO:0005886">
    <property type="term" value="C:plasma membrane"/>
    <property type="evidence" value="ECO:0007669"/>
    <property type="project" value="UniProtKB-SubCell"/>
</dbReference>
<dbReference type="GO" id="GO:0004609">
    <property type="term" value="F:phosphatidylserine decarboxylase activity"/>
    <property type="evidence" value="ECO:0007669"/>
    <property type="project" value="UniProtKB-UniRule"/>
</dbReference>
<dbReference type="GO" id="GO:0006646">
    <property type="term" value="P:phosphatidylethanolamine biosynthetic process"/>
    <property type="evidence" value="ECO:0007669"/>
    <property type="project" value="UniProtKB-UniRule"/>
</dbReference>
<dbReference type="HAMAP" id="MF_00662">
    <property type="entry name" value="PS_decarb_PSD_B_type1"/>
    <property type="match status" value="1"/>
</dbReference>
<dbReference type="InterPro" id="IPR003817">
    <property type="entry name" value="PS_Dcarbxylase"/>
</dbReference>
<dbReference type="InterPro" id="IPR033177">
    <property type="entry name" value="PSD-B"/>
</dbReference>
<dbReference type="InterPro" id="IPR033178">
    <property type="entry name" value="PSD_type1_pro"/>
</dbReference>
<dbReference type="NCBIfam" id="TIGR00163">
    <property type="entry name" value="PS_decarb"/>
    <property type="match status" value="1"/>
</dbReference>
<dbReference type="PANTHER" id="PTHR10067">
    <property type="entry name" value="PHOSPHATIDYLSERINE DECARBOXYLASE"/>
    <property type="match status" value="1"/>
</dbReference>
<dbReference type="PANTHER" id="PTHR10067:SF6">
    <property type="entry name" value="PHOSPHATIDYLSERINE DECARBOXYLASE PROENZYME, MITOCHONDRIAL"/>
    <property type="match status" value="1"/>
</dbReference>
<dbReference type="Pfam" id="PF02666">
    <property type="entry name" value="PS_Dcarbxylase"/>
    <property type="match status" value="1"/>
</dbReference>
<reference key="1">
    <citation type="journal article" date="2004" name="Proc. Natl. Acad. Sci. U.S.A.">
        <title>Insights into the evolution of Yersinia pestis through whole-genome comparison with Yersinia pseudotuberculosis.</title>
        <authorList>
            <person name="Chain P.S.G."/>
            <person name="Carniel E."/>
            <person name="Larimer F.W."/>
            <person name="Lamerdin J."/>
            <person name="Stoutland P.O."/>
            <person name="Regala W.M."/>
            <person name="Georgescu A.M."/>
            <person name="Vergez L.M."/>
            <person name="Land M.L."/>
            <person name="Motin V.L."/>
            <person name="Brubaker R.R."/>
            <person name="Fowler J."/>
            <person name="Hinnebusch J."/>
            <person name="Marceau M."/>
            <person name="Medigue C."/>
            <person name="Simonet M."/>
            <person name="Chenal-Francisque V."/>
            <person name="Souza B."/>
            <person name="Dacheux D."/>
            <person name="Elliott J.M."/>
            <person name="Derbise A."/>
            <person name="Hauser L.J."/>
            <person name="Garcia E."/>
        </authorList>
    </citation>
    <scope>NUCLEOTIDE SEQUENCE [LARGE SCALE GENOMIC DNA]</scope>
    <source>
        <strain>IP32953</strain>
    </source>
</reference>